<proteinExistence type="inferred from homology"/>
<reference key="1">
    <citation type="journal article" date="2005" name="Proc. Natl. Acad. Sci. U.S.A.">
        <title>Comparison of the complete genome sequences of Pseudomonas syringae pv. syringae B728a and pv. tomato DC3000.</title>
        <authorList>
            <person name="Feil H."/>
            <person name="Feil W.S."/>
            <person name="Chain P."/>
            <person name="Larimer F."/>
            <person name="Dibartolo G."/>
            <person name="Copeland A."/>
            <person name="Lykidis A."/>
            <person name="Trong S."/>
            <person name="Nolan M."/>
            <person name="Goltsman E."/>
            <person name="Thiel J."/>
            <person name="Malfatti S."/>
            <person name="Loper J.E."/>
            <person name="Lapidus A."/>
            <person name="Detter J.C."/>
            <person name="Land M."/>
            <person name="Richardson P.M."/>
            <person name="Kyrpides N.C."/>
            <person name="Ivanova N."/>
            <person name="Lindow S.E."/>
        </authorList>
    </citation>
    <scope>NUCLEOTIDE SEQUENCE [LARGE SCALE GENOMIC DNA]</scope>
    <source>
        <strain>B728a</strain>
    </source>
</reference>
<gene>
    <name evidence="1" type="primary">plsY</name>
    <name type="ordered locus">Psyr_4637</name>
</gene>
<name>PLSY_PSEU2</name>
<accession>Q4ZMF5</accession>
<sequence>MVRMFWLLTTFAYLLGSLSFAILLSRLSGRPDPRASGSGNAGATNMLRLAGKKLAILTLLGDLCKGLVPILIASTLSMDIAQQGWIGVCAVLGHLFPVYFRFRGGKGVATAAGVLLGLYPPAAALAIVAWLLTLYLTRTSSLAALIATPLTLPLLAWQEPHALLPMSVLTLLIVWRHRGNLRDLLAGRERHF</sequence>
<comment type="function">
    <text evidence="1">Catalyzes the transfer of an acyl group from acyl-phosphate (acyl-PO(4)) to glycerol-3-phosphate (G3P) to form lysophosphatidic acid (LPA). This enzyme utilizes acyl-phosphate as fatty acyl donor, but not acyl-CoA or acyl-ACP.</text>
</comment>
<comment type="catalytic activity">
    <reaction evidence="1">
        <text>an acyl phosphate + sn-glycerol 3-phosphate = a 1-acyl-sn-glycero-3-phosphate + phosphate</text>
        <dbReference type="Rhea" id="RHEA:34075"/>
        <dbReference type="ChEBI" id="CHEBI:43474"/>
        <dbReference type="ChEBI" id="CHEBI:57597"/>
        <dbReference type="ChEBI" id="CHEBI:57970"/>
        <dbReference type="ChEBI" id="CHEBI:59918"/>
        <dbReference type="EC" id="2.3.1.275"/>
    </reaction>
</comment>
<comment type="pathway">
    <text evidence="1">Lipid metabolism; phospholipid metabolism.</text>
</comment>
<comment type="subunit">
    <text evidence="1">Probably interacts with PlsX.</text>
</comment>
<comment type="subcellular location">
    <subcellularLocation>
        <location evidence="1">Cell inner membrane</location>
        <topology evidence="1">Multi-pass membrane protein</topology>
    </subcellularLocation>
</comment>
<comment type="similarity">
    <text evidence="1">Belongs to the PlsY family.</text>
</comment>
<evidence type="ECO:0000255" key="1">
    <source>
        <dbReference type="HAMAP-Rule" id="MF_01043"/>
    </source>
</evidence>
<organism>
    <name type="scientific">Pseudomonas syringae pv. syringae (strain B728a)</name>
    <dbReference type="NCBI Taxonomy" id="205918"/>
    <lineage>
        <taxon>Bacteria</taxon>
        <taxon>Pseudomonadati</taxon>
        <taxon>Pseudomonadota</taxon>
        <taxon>Gammaproteobacteria</taxon>
        <taxon>Pseudomonadales</taxon>
        <taxon>Pseudomonadaceae</taxon>
        <taxon>Pseudomonas</taxon>
        <taxon>Pseudomonas syringae</taxon>
    </lineage>
</organism>
<feature type="chain" id="PRO_0000188432" description="Glycerol-3-phosphate acyltransferase">
    <location>
        <begin position="1"/>
        <end position="192"/>
    </location>
</feature>
<feature type="transmembrane region" description="Helical" evidence="1">
    <location>
        <begin position="4"/>
        <end position="24"/>
    </location>
</feature>
<feature type="transmembrane region" description="Helical" evidence="1">
    <location>
        <begin position="54"/>
        <end position="74"/>
    </location>
</feature>
<feature type="transmembrane region" description="Helical" evidence="1">
    <location>
        <begin position="80"/>
        <end position="100"/>
    </location>
</feature>
<feature type="transmembrane region" description="Helical" evidence="1">
    <location>
        <begin position="112"/>
        <end position="132"/>
    </location>
</feature>
<feature type="transmembrane region" description="Helical" evidence="1">
    <location>
        <begin position="154"/>
        <end position="174"/>
    </location>
</feature>
<keyword id="KW-0997">Cell inner membrane</keyword>
<keyword id="KW-1003">Cell membrane</keyword>
<keyword id="KW-0444">Lipid biosynthesis</keyword>
<keyword id="KW-0443">Lipid metabolism</keyword>
<keyword id="KW-0472">Membrane</keyword>
<keyword id="KW-0594">Phospholipid biosynthesis</keyword>
<keyword id="KW-1208">Phospholipid metabolism</keyword>
<keyword id="KW-0808">Transferase</keyword>
<keyword id="KW-0812">Transmembrane</keyword>
<keyword id="KW-1133">Transmembrane helix</keyword>
<protein>
    <recommendedName>
        <fullName evidence="1">Glycerol-3-phosphate acyltransferase</fullName>
    </recommendedName>
    <alternativeName>
        <fullName evidence="1">Acyl-PO4 G3P acyltransferase</fullName>
    </alternativeName>
    <alternativeName>
        <fullName evidence="1">Acyl-phosphate--glycerol-3-phosphate acyltransferase</fullName>
    </alternativeName>
    <alternativeName>
        <fullName evidence="1">G3P acyltransferase</fullName>
        <shortName evidence="1">GPAT</shortName>
        <ecNumber evidence="1">2.3.1.275</ecNumber>
    </alternativeName>
    <alternativeName>
        <fullName evidence="1">Lysophosphatidic acid synthase</fullName>
        <shortName evidence="1">LPA synthase</shortName>
    </alternativeName>
</protein>
<dbReference type="EC" id="2.3.1.275" evidence="1"/>
<dbReference type="EMBL" id="CP000075">
    <property type="protein sequence ID" value="AAY39667.1"/>
    <property type="molecule type" value="Genomic_DNA"/>
</dbReference>
<dbReference type="RefSeq" id="YP_237705.1">
    <property type="nucleotide sequence ID" value="NC_007005.1"/>
</dbReference>
<dbReference type="SMR" id="Q4ZMF5"/>
<dbReference type="STRING" id="205918.Psyr_4637"/>
<dbReference type="KEGG" id="psb:Psyr_4637"/>
<dbReference type="PATRIC" id="fig|205918.7.peg.4782"/>
<dbReference type="eggNOG" id="COG0344">
    <property type="taxonomic scope" value="Bacteria"/>
</dbReference>
<dbReference type="HOGENOM" id="CLU_081254_0_0_6"/>
<dbReference type="OrthoDB" id="9777124at2"/>
<dbReference type="UniPathway" id="UPA00085"/>
<dbReference type="Proteomes" id="UP000000426">
    <property type="component" value="Chromosome"/>
</dbReference>
<dbReference type="GO" id="GO:0005886">
    <property type="term" value="C:plasma membrane"/>
    <property type="evidence" value="ECO:0007669"/>
    <property type="project" value="UniProtKB-SubCell"/>
</dbReference>
<dbReference type="GO" id="GO:0043772">
    <property type="term" value="F:acyl-phosphate glycerol-3-phosphate acyltransferase activity"/>
    <property type="evidence" value="ECO:0007669"/>
    <property type="project" value="UniProtKB-UniRule"/>
</dbReference>
<dbReference type="GO" id="GO:0008654">
    <property type="term" value="P:phospholipid biosynthetic process"/>
    <property type="evidence" value="ECO:0007669"/>
    <property type="project" value="UniProtKB-UniRule"/>
</dbReference>
<dbReference type="HAMAP" id="MF_01043">
    <property type="entry name" value="PlsY"/>
    <property type="match status" value="1"/>
</dbReference>
<dbReference type="InterPro" id="IPR003811">
    <property type="entry name" value="G3P_acylTferase_PlsY"/>
</dbReference>
<dbReference type="NCBIfam" id="TIGR00023">
    <property type="entry name" value="glycerol-3-phosphate 1-O-acyltransferase PlsY"/>
    <property type="match status" value="1"/>
</dbReference>
<dbReference type="PANTHER" id="PTHR30309:SF0">
    <property type="entry name" value="GLYCEROL-3-PHOSPHATE ACYLTRANSFERASE-RELATED"/>
    <property type="match status" value="1"/>
</dbReference>
<dbReference type="PANTHER" id="PTHR30309">
    <property type="entry name" value="INNER MEMBRANE PROTEIN YGIH"/>
    <property type="match status" value="1"/>
</dbReference>
<dbReference type="Pfam" id="PF02660">
    <property type="entry name" value="G3P_acyltransf"/>
    <property type="match status" value="1"/>
</dbReference>
<dbReference type="SMART" id="SM01207">
    <property type="entry name" value="G3P_acyltransf"/>
    <property type="match status" value="1"/>
</dbReference>